<name>DAPE_RHOPB</name>
<gene>
    <name evidence="1" type="primary">dapE</name>
    <name type="ordered locus">RPC_0809</name>
</gene>
<keyword id="KW-0028">Amino-acid biosynthesis</keyword>
<keyword id="KW-0170">Cobalt</keyword>
<keyword id="KW-0220">Diaminopimelate biosynthesis</keyword>
<keyword id="KW-0378">Hydrolase</keyword>
<keyword id="KW-0457">Lysine biosynthesis</keyword>
<keyword id="KW-0479">Metal-binding</keyword>
<keyword id="KW-0862">Zinc</keyword>
<evidence type="ECO:0000255" key="1">
    <source>
        <dbReference type="HAMAP-Rule" id="MF_01690"/>
    </source>
</evidence>
<proteinExistence type="inferred from homology"/>
<protein>
    <recommendedName>
        <fullName evidence="1">Succinyl-diaminopimelate desuccinylase</fullName>
        <shortName evidence="1">SDAP desuccinylase</shortName>
        <ecNumber evidence="1">3.5.1.18</ecNumber>
    </recommendedName>
    <alternativeName>
        <fullName evidence="1">N-succinyl-LL-2,6-diaminoheptanedioate amidohydrolase</fullName>
    </alternativeName>
</protein>
<sequence>MPSNATDALAIAQDLLRCPSVTPADAGALGVLERLLHAAGFAVHRVTFSEPGTADIDNLYARIGTTAPHICFAGHTDVVPPGDEAAWSHDAFAGEVHDGLLYGRGAVDMKGGIACSVAAVLQHLATHGGQPHESGQGSISFLITGDEEDVAVNGTVKLLQWAAARGETFDHCVLGEPSNVEALGDTIKIGRRGSLSGTLIVDGVQGHVAYPHRASNPVPDIAALIVALGAEPLDAGTDTFQPSNLEFTSVDVGNPATNVIPAQARAKFNIRFNDRHSAESLQTLIEARVQAACGNRIRARIDWQPSNAGAFVTKPGAFTDLVAAAIEDVTGRKPELNTGGGTSDARFITHYCPVIEFGLVGQTMHKIDERTPVADLETLTQIYRGVLQRYFA</sequence>
<accession>Q21B56</accession>
<comment type="function">
    <text evidence="1">Catalyzes the hydrolysis of N-succinyl-L,L-diaminopimelic acid (SDAP), forming succinate and LL-2,6-diaminopimelate (DAP), an intermediate involved in the bacterial biosynthesis of lysine and meso-diaminopimelic acid, an essential component of bacterial cell walls.</text>
</comment>
<comment type="catalytic activity">
    <reaction evidence="1">
        <text>N-succinyl-(2S,6S)-2,6-diaminopimelate + H2O = (2S,6S)-2,6-diaminopimelate + succinate</text>
        <dbReference type="Rhea" id="RHEA:22608"/>
        <dbReference type="ChEBI" id="CHEBI:15377"/>
        <dbReference type="ChEBI" id="CHEBI:30031"/>
        <dbReference type="ChEBI" id="CHEBI:57609"/>
        <dbReference type="ChEBI" id="CHEBI:58087"/>
        <dbReference type="EC" id="3.5.1.18"/>
    </reaction>
</comment>
<comment type="cofactor">
    <cofactor evidence="1">
        <name>Zn(2+)</name>
        <dbReference type="ChEBI" id="CHEBI:29105"/>
    </cofactor>
    <cofactor evidence="1">
        <name>Co(2+)</name>
        <dbReference type="ChEBI" id="CHEBI:48828"/>
    </cofactor>
    <text evidence="1">Binds 2 Zn(2+) or Co(2+) ions per subunit.</text>
</comment>
<comment type="pathway">
    <text evidence="1">Amino-acid biosynthesis; L-lysine biosynthesis via DAP pathway; LL-2,6-diaminopimelate from (S)-tetrahydrodipicolinate (succinylase route): step 3/3.</text>
</comment>
<comment type="subunit">
    <text evidence="1">Homodimer.</text>
</comment>
<comment type="similarity">
    <text evidence="1">Belongs to the peptidase M20A family. DapE subfamily.</text>
</comment>
<dbReference type="EC" id="3.5.1.18" evidence="1"/>
<dbReference type="EMBL" id="CP000301">
    <property type="protein sequence ID" value="ABD86380.1"/>
    <property type="molecule type" value="Genomic_DNA"/>
</dbReference>
<dbReference type="SMR" id="Q21B56"/>
<dbReference type="STRING" id="316056.RPC_0809"/>
<dbReference type="KEGG" id="rpc:RPC_0809"/>
<dbReference type="eggNOG" id="COG0624">
    <property type="taxonomic scope" value="Bacteria"/>
</dbReference>
<dbReference type="HOGENOM" id="CLU_021802_4_0_5"/>
<dbReference type="OrthoDB" id="9809784at2"/>
<dbReference type="UniPathway" id="UPA00034">
    <property type="reaction ID" value="UER00021"/>
</dbReference>
<dbReference type="GO" id="GO:0008777">
    <property type="term" value="F:acetylornithine deacetylase activity"/>
    <property type="evidence" value="ECO:0007669"/>
    <property type="project" value="TreeGrafter"/>
</dbReference>
<dbReference type="GO" id="GO:0050897">
    <property type="term" value="F:cobalt ion binding"/>
    <property type="evidence" value="ECO:0007669"/>
    <property type="project" value="UniProtKB-UniRule"/>
</dbReference>
<dbReference type="GO" id="GO:0009014">
    <property type="term" value="F:succinyl-diaminopimelate desuccinylase activity"/>
    <property type="evidence" value="ECO:0007669"/>
    <property type="project" value="UniProtKB-UniRule"/>
</dbReference>
<dbReference type="GO" id="GO:0008270">
    <property type="term" value="F:zinc ion binding"/>
    <property type="evidence" value="ECO:0007669"/>
    <property type="project" value="UniProtKB-UniRule"/>
</dbReference>
<dbReference type="GO" id="GO:0019877">
    <property type="term" value="P:diaminopimelate biosynthetic process"/>
    <property type="evidence" value="ECO:0007669"/>
    <property type="project" value="UniProtKB-UniRule"/>
</dbReference>
<dbReference type="GO" id="GO:0006526">
    <property type="term" value="P:L-arginine biosynthetic process"/>
    <property type="evidence" value="ECO:0007669"/>
    <property type="project" value="TreeGrafter"/>
</dbReference>
<dbReference type="GO" id="GO:0009089">
    <property type="term" value="P:lysine biosynthetic process via diaminopimelate"/>
    <property type="evidence" value="ECO:0007669"/>
    <property type="project" value="UniProtKB-UniRule"/>
</dbReference>
<dbReference type="CDD" id="cd03891">
    <property type="entry name" value="M20_DapE_proteobac"/>
    <property type="match status" value="1"/>
</dbReference>
<dbReference type="Gene3D" id="3.40.630.10">
    <property type="entry name" value="Zn peptidases"/>
    <property type="match status" value="2"/>
</dbReference>
<dbReference type="HAMAP" id="MF_01690">
    <property type="entry name" value="DapE"/>
    <property type="match status" value="1"/>
</dbReference>
<dbReference type="InterPro" id="IPR036264">
    <property type="entry name" value="Bact_exopeptidase_dim_dom"/>
</dbReference>
<dbReference type="InterPro" id="IPR005941">
    <property type="entry name" value="DapE_proteobac"/>
</dbReference>
<dbReference type="InterPro" id="IPR002933">
    <property type="entry name" value="Peptidase_M20"/>
</dbReference>
<dbReference type="InterPro" id="IPR011650">
    <property type="entry name" value="Peptidase_M20_dimer"/>
</dbReference>
<dbReference type="InterPro" id="IPR050072">
    <property type="entry name" value="Peptidase_M20A"/>
</dbReference>
<dbReference type="NCBIfam" id="TIGR01246">
    <property type="entry name" value="dapE_proteo"/>
    <property type="match status" value="1"/>
</dbReference>
<dbReference type="NCBIfam" id="NF009557">
    <property type="entry name" value="PRK13009.1"/>
    <property type="match status" value="1"/>
</dbReference>
<dbReference type="PANTHER" id="PTHR43808">
    <property type="entry name" value="ACETYLORNITHINE DEACETYLASE"/>
    <property type="match status" value="1"/>
</dbReference>
<dbReference type="PANTHER" id="PTHR43808:SF31">
    <property type="entry name" value="N-ACETYL-L-CITRULLINE DEACETYLASE"/>
    <property type="match status" value="1"/>
</dbReference>
<dbReference type="Pfam" id="PF07687">
    <property type="entry name" value="M20_dimer"/>
    <property type="match status" value="1"/>
</dbReference>
<dbReference type="Pfam" id="PF01546">
    <property type="entry name" value="Peptidase_M20"/>
    <property type="match status" value="1"/>
</dbReference>
<dbReference type="SUPFAM" id="SSF55031">
    <property type="entry name" value="Bacterial exopeptidase dimerisation domain"/>
    <property type="match status" value="1"/>
</dbReference>
<dbReference type="SUPFAM" id="SSF53187">
    <property type="entry name" value="Zn-dependent exopeptidases"/>
    <property type="match status" value="1"/>
</dbReference>
<organism>
    <name type="scientific">Rhodopseudomonas palustris (strain BisB18)</name>
    <dbReference type="NCBI Taxonomy" id="316056"/>
    <lineage>
        <taxon>Bacteria</taxon>
        <taxon>Pseudomonadati</taxon>
        <taxon>Pseudomonadota</taxon>
        <taxon>Alphaproteobacteria</taxon>
        <taxon>Hyphomicrobiales</taxon>
        <taxon>Nitrobacteraceae</taxon>
        <taxon>Rhodopseudomonas</taxon>
    </lineage>
</organism>
<reference key="1">
    <citation type="submission" date="2006-03" db="EMBL/GenBank/DDBJ databases">
        <title>Complete sequence of Rhodopseudomonas palustris BisB18.</title>
        <authorList>
            <consortium name="US DOE Joint Genome Institute"/>
            <person name="Copeland A."/>
            <person name="Lucas S."/>
            <person name="Lapidus A."/>
            <person name="Barry K."/>
            <person name="Detter J.C."/>
            <person name="Glavina del Rio T."/>
            <person name="Hammon N."/>
            <person name="Israni S."/>
            <person name="Dalin E."/>
            <person name="Tice H."/>
            <person name="Pitluck S."/>
            <person name="Chain P."/>
            <person name="Malfatti S."/>
            <person name="Shin M."/>
            <person name="Vergez L."/>
            <person name="Schmutz J."/>
            <person name="Larimer F."/>
            <person name="Land M."/>
            <person name="Hauser L."/>
            <person name="Pelletier D.A."/>
            <person name="Kyrpides N."/>
            <person name="Anderson I."/>
            <person name="Oda Y."/>
            <person name="Harwood C.S."/>
            <person name="Richardson P."/>
        </authorList>
    </citation>
    <scope>NUCLEOTIDE SEQUENCE [LARGE SCALE GENOMIC DNA]</scope>
    <source>
        <strain>BisB18</strain>
    </source>
</reference>
<feature type="chain" id="PRO_0000375691" description="Succinyl-diaminopimelate desuccinylase">
    <location>
        <begin position="1"/>
        <end position="392"/>
    </location>
</feature>
<feature type="active site" evidence="1">
    <location>
        <position position="77"/>
    </location>
</feature>
<feature type="active site" description="Proton acceptor" evidence="1">
    <location>
        <position position="147"/>
    </location>
</feature>
<feature type="binding site" evidence="1">
    <location>
        <position position="75"/>
    </location>
    <ligand>
        <name>Zn(2+)</name>
        <dbReference type="ChEBI" id="CHEBI:29105"/>
        <label>1</label>
    </ligand>
</feature>
<feature type="binding site" evidence="1">
    <location>
        <position position="108"/>
    </location>
    <ligand>
        <name>Zn(2+)</name>
        <dbReference type="ChEBI" id="CHEBI:29105"/>
        <label>1</label>
    </ligand>
</feature>
<feature type="binding site" evidence="1">
    <location>
        <position position="108"/>
    </location>
    <ligand>
        <name>Zn(2+)</name>
        <dbReference type="ChEBI" id="CHEBI:29105"/>
        <label>2</label>
    </ligand>
</feature>
<feature type="binding site" evidence="1">
    <location>
        <position position="148"/>
    </location>
    <ligand>
        <name>Zn(2+)</name>
        <dbReference type="ChEBI" id="CHEBI:29105"/>
        <label>2</label>
    </ligand>
</feature>
<feature type="binding site" evidence="1">
    <location>
        <position position="176"/>
    </location>
    <ligand>
        <name>Zn(2+)</name>
        <dbReference type="ChEBI" id="CHEBI:29105"/>
        <label>1</label>
    </ligand>
</feature>
<feature type="binding site" evidence="1">
    <location>
        <position position="365"/>
    </location>
    <ligand>
        <name>Zn(2+)</name>
        <dbReference type="ChEBI" id="CHEBI:29105"/>
        <label>2</label>
    </ligand>
</feature>